<sequence length="224" mass="25518">MDYTLTRIDPNGENDRYPLQKQEIVTDPLEQEVNKSVYMGKLEHALHDMVNWGRKNSIWPYNFGLSCCYVEMVTSFTAVHDVARFGAEVLRASPRQADLMVVAGTCFTKMAPVIQRLYDQMLEPKWVISMGACANSGGMYDIYSVVQGVDKFIPVDVYIPGCPPRPEAYMQALMLLQESIGKERRPLSWVVGDQGVYRANMQSERERKRGERIAVTNLRTPDEI</sequence>
<proteinExistence type="inferred from homology"/>
<name>NUOB_KLEP3</name>
<accession>B5XNV5</accession>
<evidence type="ECO:0000255" key="1">
    <source>
        <dbReference type="HAMAP-Rule" id="MF_01356"/>
    </source>
</evidence>
<organism>
    <name type="scientific">Klebsiella pneumoniae (strain 342)</name>
    <dbReference type="NCBI Taxonomy" id="507522"/>
    <lineage>
        <taxon>Bacteria</taxon>
        <taxon>Pseudomonadati</taxon>
        <taxon>Pseudomonadota</taxon>
        <taxon>Gammaproteobacteria</taxon>
        <taxon>Enterobacterales</taxon>
        <taxon>Enterobacteriaceae</taxon>
        <taxon>Klebsiella/Raoultella group</taxon>
        <taxon>Klebsiella</taxon>
        <taxon>Klebsiella pneumoniae complex</taxon>
    </lineage>
</organism>
<feature type="chain" id="PRO_0000376257" description="NADH-quinone oxidoreductase subunit B">
    <location>
        <begin position="1"/>
        <end position="224"/>
    </location>
</feature>
<feature type="binding site" evidence="1">
    <location>
        <position position="67"/>
    </location>
    <ligand>
        <name>[4Fe-4S] cluster</name>
        <dbReference type="ChEBI" id="CHEBI:49883"/>
    </ligand>
</feature>
<feature type="binding site" evidence="1">
    <location>
        <position position="68"/>
    </location>
    <ligand>
        <name>[4Fe-4S] cluster</name>
        <dbReference type="ChEBI" id="CHEBI:49883"/>
    </ligand>
</feature>
<feature type="binding site" evidence="1">
    <location>
        <position position="133"/>
    </location>
    <ligand>
        <name>[4Fe-4S] cluster</name>
        <dbReference type="ChEBI" id="CHEBI:49883"/>
    </ligand>
</feature>
<feature type="binding site" evidence="1">
    <location>
        <position position="162"/>
    </location>
    <ligand>
        <name>[4Fe-4S] cluster</name>
        <dbReference type="ChEBI" id="CHEBI:49883"/>
    </ligand>
</feature>
<comment type="function">
    <text evidence="1">NDH-1 shuttles electrons from NADH, via FMN and iron-sulfur (Fe-S) centers, to quinones in the respiratory chain. The immediate electron acceptor for the enzyme in this species is believed to be ubiquinone. Couples the redox reaction to proton translocation (for every two electrons transferred, four hydrogen ions are translocated across the cytoplasmic membrane), and thus conserves the redox energy in a proton gradient.</text>
</comment>
<comment type="catalytic activity">
    <reaction evidence="1">
        <text>a quinone + NADH + 5 H(+)(in) = a quinol + NAD(+) + 4 H(+)(out)</text>
        <dbReference type="Rhea" id="RHEA:57888"/>
        <dbReference type="ChEBI" id="CHEBI:15378"/>
        <dbReference type="ChEBI" id="CHEBI:24646"/>
        <dbReference type="ChEBI" id="CHEBI:57540"/>
        <dbReference type="ChEBI" id="CHEBI:57945"/>
        <dbReference type="ChEBI" id="CHEBI:132124"/>
    </reaction>
</comment>
<comment type="cofactor">
    <cofactor evidence="1">
        <name>[4Fe-4S] cluster</name>
        <dbReference type="ChEBI" id="CHEBI:49883"/>
    </cofactor>
    <text evidence="1">Binds 1 [4Fe-4S] cluster.</text>
</comment>
<comment type="subunit">
    <text evidence="1">NDH-1 is composed of 13 different subunits. Subunits NuoB, CD, E, F, and G constitute the peripheral sector of the complex.</text>
</comment>
<comment type="subcellular location">
    <subcellularLocation>
        <location evidence="1">Cell inner membrane</location>
        <topology evidence="1">Peripheral membrane protein</topology>
        <orientation evidence="1">Cytoplasmic side</orientation>
    </subcellularLocation>
</comment>
<comment type="similarity">
    <text evidence="1">Belongs to the complex I 20 kDa subunit family.</text>
</comment>
<protein>
    <recommendedName>
        <fullName evidence="1">NADH-quinone oxidoreductase subunit B</fullName>
        <ecNumber evidence="1">7.1.1.-</ecNumber>
    </recommendedName>
    <alternativeName>
        <fullName evidence="1">NADH dehydrogenase I subunit B</fullName>
    </alternativeName>
    <alternativeName>
        <fullName evidence="1">NDH-1 subunit B</fullName>
    </alternativeName>
</protein>
<reference key="1">
    <citation type="journal article" date="2008" name="PLoS Genet.">
        <title>Complete genome sequence of the N2-fixing broad host range endophyte Klebsiella pneumoniae 342 and virulence predictions verified in mice.</title>
        <authorList>
            <person name="Fouts D.E."/>
            <person name="Tyler H.L."/>
            <person name="DeBoy R.T."/>
            <person name="Daugherty S."/>
            <person name="Ren Q."/>
            <person name="Badger J.H."/>
            <person name="Durkin A.S."/>
            <person name="Huot H."/>
            <person name="Shrivastava S."/>
            <person name="Kothari S."/>
            <person name="Dodson R.J."/>
            <person name="Mohamoud Y."/>
            <person name="Khouri H."/>
            <person name="Roesch L.F.W."/>
            <person name="Krogfelt K.A."/>
            <person name="Struve C."/>
            <person name="Triplett E.W."/>
            <person name="Methe B.A."/>
        </authorList>
    </citation>
    <scope>NUCLEOTIDE SEQUENCE [LARGE SCALE GENOMIC DNA]</scope>
    <source>
        <strain>342</strain>
    </source>
</reference>
<keyword id="KW-0004">4Fe-4S</keyword>
<keyword id="KW-0997">Cell inner membrane</keyword>
<keyword id="KW-1003">Cell membrane</keyword>
<keyword id="KW-0408">Iron</keyword>
<keyword id="KW-0411">Iron-sulfur</keyword>
<keyword id="KW-0472">Membrane</keyword>
<keyword id="KW-0479">Metal-binding</keyword>
<keyword id="KW-0520">NAD</keyword>
<keyword id="KW-0874">Quinone</keyword>
<keyword id="KW-1278">Translocase</keyword>
<keyword id="KW-0813">Transport</keyword>
<keyword id="KW-0830">Ubiquinone</keyword>
<gene>
    <name evidence="1" type="primary">nuoB</name>
    <name type="ordered locus">KPK_1472</name>
</gene>
<dbReference type="EC" id="7.1.1.-" evidence="1"/>
<dbReference type="EMBL" id="CP000964">
    <property type="protein sequence ID" value="ACI07509.1"/>
    <property type="molecule type" value="Genomic_DNA"/>
</dbReference>
<dbReference type="SMR" id="B5XNV5"/>
<dbReference type="KEGG" id="kpe:KPK_1472"/>
<dbReference type="HOGENOM" id="CLU_055737_7_3_6"/>
<dbReference type="Proteomes" id="UP000001734">
    <property type="component" value="Chromosome"/>
</dbReference>
<dbReference type="GO" id="GO:0005886">
    <property type="term" value="C:plasma membrane"/>
    <property type="evidence" value="ECO:0007669"/>
    <property type="project" value="UniProtKB-SubCell"/>
</dbReference>
<dbReference type="GO" id="GO:0045271">
    <property type="term" value="C:respiratory chain complex I"/>
    <property type="evidence" value="ECO:0007669"/>
    <property type="project" value="TreeGrafter"/>
</dbReference>
<dbReference type="GO" id="GO:0051539">
    <property type="term" value="F:4 iron, 4 sulfur cluster binding"/>
    <property type="evidence" value="ECO:0007669"/>
    <property type="project" value="UniProtKB-KW"/>
</dbReference>
<dbReference type="GO" id="GO:0005506">
    <property type="term" value="F:iron ion binding"/>
    <property type="evidence" value="ECO:0007669"/>
    <property type="project" value="UniProtKB-UniRule"/>
</dbReference>
<dbReference type="GO" id="GO:0008137">
    <property type="term" value="F:NADH dehydrogenase (ubiquinone) activity"/>
    <property type="evidence" value="ECO:0007669"/>
    <property type="project" value="InterPro"/>
</dbReference>
<dbReference type="GO" id="GO:0050136">
    <property type="term" value="F:NADH:ubiquinone reductase (non-electrogenic) activity"/>
    <property type="evidence" value="ECO:0007669"/>
    <property type="project" value="UniProtKB-UniRule"/>
</dbReference>
<dbReference type="GO" id="GO:0048038">
    <property type="term" value="F:quinone binding"/>
    <property type="evidence" value="ECO:0007669"/>
    <property type="project" value="UniProtKB-KW"/>
</dbReference>
<dbReference type="GO" id="GO:0009060">
    <property type="term" value="P:aerobic respiration"/>
    <property type="evidence" value="ECO:0007669"/>
    <property type="project" value="TreeGrafter"/>
</dbReference>
<dbReference type="GO" id="GO:0015990">
    <property type="term" value="P:electron transport coupled proton transport"/>
    <property type="evidence" value="ECO:0007669"/>
    <property type="project" value="TreeGrafter"/>
</dbReference>
<dbReference type="FunFam" id="3.40.50.12280:FF:000002">
    <property type="entry name" value="NADH-quinone oxidoreductase subunit B"/>
    <property type="match status" value="1"/>
</dbReference>
<dbReference type="Gene3D" id="3.40.50.12280">
    <property type="match status" value="1"/>
</dbReference>
<dbReference type="HAMAP" id="MF_01356">
    <property type="entry name" value="NDH1_NuoB"/>
    <property type="match status" value="1"/>
</dbReference>
<dbReference type="InterPro" id="IPR006137">
    <property type="entry name" value="NADH_UbQ_OxRdtase-like_20kDa"/>
</dbReference>
<dbReference type="InterPro" id="IPR006138">
    <property type="entry name" value="NADH_UQ_OxRdtase_20Kd_su"/>
</dbReference>
<dbReference type="NCBIfam" id="TIGR01957">
    <property type="entry name" value="nuoB_fam"/>
    <property type="match status" value="1"/>
</dbReference>
<dbReference type="NCBIfam" id="NF005012">
    <property type="entry name" value="PRK06411.1"/>
    <property type="match status" value="1"/>
</dbReference>
<dbReference type="PANTHER" id="PTHR11995">
    <property type="entry name" value="NADH DEHYDROGENASE"/>
    <property type="match status" value="1"/>
</dbReference>
<dbReference type="PANTHER" id="PTHR11995:SF14">
    <property type="entry name" value="NADH DEHYDROGENASE [UBIQUINONE] IRON-SULFUR PROTEIN 7, MITOCHONDRIAL"/>
    <property type="match status" value="1"/>
</dbReference>
<dbReference type="Pfam" id="PF01058">
    <property type="entry name" value="Oxidored_q6"/>
    <property type="match status" value="1"/>
</dbReference>
<dbReference type="SUPFAM" id="SSF56770">
    <property type="entry name" value="HydA/Nqo6-like"/>
    <property type="match status" value="1"/>
</dbReference>
<dbReference type="PROSITE" id="PS01150">
    <property type="entry name" value="COMPLEX1_20K"/>
    <property type="match status" value="1"/>
</dbReference>